<protein>
    <recommendedName>
        <fullName>MAP7 domain-containing protein 1</fullName>
    </recommendedName>
    <alternativeName>
        <fullName>Arginine/proline-rich coiled-coil domain-containing protein 1</fullName>
    </alternativeName>
    <alternativeName>
        <fullName>Proline/arginine-rich coiled-coil domain-containing protein 1</fullName>
    </alternativeName>
</protein>
<comment type="function">
    <text evidence="1">Microtubule-stabilizing protein involved in the control of cell motility and neurite outgrowth. Facilitate microtubule stabilization through the maintenance of acetylated stable microtubules.</text>
</comment>
<comment type="subcellular location">
    <subcellularLocation>
        <location evidence="4">Cytoplasm</location>
        <location evidence="4">Cytoskeleton</location>
        <location evidence="4">Spindle</location>
    </subcellularLocation>
    <subcellularLocation>
        <location evidence="1">Cytoplasm</location>
        <location evidence="1">Cytoskeleton</location>
    </subcellularLocation>
    <subcellularLocation>
        <location evidence="1">Cytoplasm</location>
        <location evidence="1">Cytoskeleton</location>
        <location evidence="1">Microtubule organizing center</location>
        <location evidence="1">Centrosome</location>
    </subcellularLocation>
    <subcellularLocation>
        <location evidence="1">Midbody</location>
    </subcellularLocation>
</comment>
<comment type="alternative products">
    <event type="alternative splicing"/>
    <isoform>
        <id>Q3KQU3-1</id>
        <name>1</name>
        <sequence type="displayed"/>
    </isoform>
    <isoform>
        <id>Q3KQU3-2</id>
        <name>2</name>
        <sequence type="described" ref="VSP_028484 VSP_028488"/>
    </isoform>
    <isoform>
        <id>Q3KQU3-3</id>
        <name>3</name>
        <sequence type="described" ref="VSP_028483 VSP_028486 VSP_028487 VSP_028488"/>
    </isoform>
    <isoform>
        <id>Q3KQU3-4</id>
        <name>4</name>
        <sequence type="described" ref="VSP_028485 VSP_028488"/>
    </isoform>
</comment>
<comment type="similarity">
    <text evidence="9">Belongs to the MAP7 family.</text>
</comment>
<comment type="sequence caution" evidence="9">
    <conflict type="frameshift">
        <sequence resource="EMBL-CDS" id="AAG17244"/>
    </conflict>
</comment>
<comment type="sequence caution" evidence="9">
    <conflict type="erroneous initiation">
        <sequence resource="EMBL-CDS" id="BAA86501"/>
    </conflict>
</comment>
<gene>
    <name type="primary">MAP7D1</name>
    <name type="synonym">KIAA1187</name>
    <name type="synonym">PARCC1</name>
    <name type="synonym">RPRC1</name>
    <name type="ORF">PP2464</name>
</gene>
<dbReference type="EMBL" id="AB033013">
    <property type="protein sequence ID" value="BAA86501.2"/>
    <property type="status" value="ALT_INIT"/>
    <property type="molecule type" value="mRNA"/>
</dbReference>
<dbReference type="EMBL" id="AK001212">
    <property type="protein sequence ID" value="BAA91557.1"/>
    <property type="molecule type" value="mRNA"/>
</dbReference>
<dbReference type="EMBL" id="AK095939">
    <property type="protein sequence ID" value="BAC04654.1"/>
    <property type="molecule type" value="mRNA"/>
</dbReference>
<dbReference type="EMBL" id="CH471059">
    <property type="protein sequence ID" value="EAX07381.1"/>
    <property type="molecule type" value="Genomic_DNA"/>
</dbReference>
<dbReference type="EMBL" id="CH471059">
    <property type="protein sequence ID" value="EAX07382.1"/>
    <property type="molecule type" value="Genomic_DNA"/>
</dbReference>
<dbReference type="EMBL" id="BC027334">
    <property type="protein sequence ID" value="AAH27334.1"/>
    <property type="molecule type" value="mRNA"/>
</dbReference>
<dbReference type="EMBL" id="BC106053">
    <property type="protein sequence ID" value="AAI06054.1"/>
    <property type="molecule type" value="mRNA"/>
</dbReference>
<dbReference type="EMBL" id="AF218002">
    <property type="protein sequence ID" value="AAG17244.1"/>
    <property type="status" value="ALT_FRAME"/>
    <property type="molecule type" value="mRNA"/>
</dbReference>
<dbReference type="EMBL" id="AL136547">
    <property type="protein sequence ID" value="CAB66482.2"/>
    <property type="molecule type" value="mRNA"/>
</dbReference>
<dbReference type="EMBL" id="CR457254">
    <property type="protein sequence ID" value="CAG33535.1"/>
    <property type="molecule type" value="mRNA"/>
</dbReference>
<dbReference type="CCDS" id="CCDS30673.1">
    <molecule id="Q3KQU3-1"/>
</dbReference>
<dbReference type="CCDS" id="CCDS65492.1">
    <molecule id="Q3KQU3-4"/>
</dbReference>
<dbReference type="CCDS" id="CCDS65493.1">
    <molecule id="Q3KQU3-2"/>
</dbReference>
<dbReference type="RefSeq" id="NP_001273294.1">
    <molecule id="Q3KQU3-2"/>
    <property type="nucleotide sequence ID" value="NM_001286365.2"/>
</dbReference>
<dbReference type="RefSeq" id="NP_001273295.1">
    <molecule id="Q3KQU3-4"/>
    <property type="nucleotide sequence ID" value="NM_001286366.2"/>
</dbReference>
<dbReference type="RefSeq" id="NP_060537.3">
    <molecule id="Q3KQU3-1"/>
    <property type="nucleotide sequence ID" value="NM_018067.4"/>
</dbReference>
<dbReference type="SMR" id="Q3KQU3"/>
<dbReference type="BioGRID" id="120825">
    <property type="interactions" value="190"/>
</dbReference>
<dbReference type="FunCoup" id="Q3KQU3">
    <property type="interactions" value="1349"/>
</dbReference>
<dbReference type="IntAct" id="Q3KQU3">
    <property type="interactions" value="149"/>
</dbReference>
<dbReference type="MINT" id="Q3KQU3"/>
<dbReference type="STRING" id="9606.ENSP00000362244"/>
<dbReference type="GlyCosmos" id="Q3KQU3">
    <property type="glycosylation" value="1 site, 1 glycan"/>
</dbReference>
<dbReference type="GlyGen" id="Q3KQU3">
    <property type="glycosylation" value="9 sites, 1 O-linked glycan (4 sites)"/>
</dbReference>
<dbReference type="iPTMnet" id="Q3KQU3"/>
<dbReference type="PhosphoSitePlus" id="Q3KQU3"/>
<dbReference type="SwissPalm" id="Q3KQU3"/>
<dbReference type="BioMuta" id="MAP7D1"/>
<dbReference type="DMDM" id="121942584"/>
<dbReference type="jPOST" id="Q3KQU3"/>
<dbReference type="MassIVE" id="Q3KQU3"/>
<dbReference type="PaxDb" id="9606-ENSP00000362244"/>
<dbReference type="PeptideAtlas" id="Q3KQU3"/>
<dbReference type="ProteomicsDB" id="61723">
    <molecule id="Q3KQU3-1"/>
</dbReference>
<dbReference type="ProteomicsDB" id="61724">
    <molecule id="Q3KQU3-2"/>
</dbReference>
<dbReference type="ProteomicsDB" id="61725">
    <molecule id="Q3KQU3-3"/>
</dbReference>
<dbReference type="ProteomicsDB" id="61726">
    <molecule id="Q3KQU3-4"/>
</dbReference>
<dbReference type="Pumba" id="Q3KQU3"/>
<dbReference type="Antibodypedia" id="31646">
    <property type="antibodies" value="70 antibodies from 18 providers"/>
</dbReference>
<dbReference type="DNASU" id="55700"/>
<dbReference type="Ensembl" id="ENST00000316156.8">
    <molecule id="Q3KQU3-2"/>
    <property type="protein sequence ID" value="ENSP00000320228.4"/>
    <property type="gene ID" value="ENSG00000116871.16"/>
</dbReference>
<dbReference type="Ensembl" id="ENST00000373150.8">
    <molecule id="Q3KQU3-4"/>
    <property type="protein sequence ID" value="ENSP00000362243.4"/>
    <property type="gene ID" value="ENSG00000116871.16"/>
</dbReference>
<dbReference type="Ensembl" id="ENST00000373151.6">
    <molecule id="Q3KQU3-1"/>
    <property type="protein sequence ID" value="ENSP00000362244.2"/>
    <property type="gene ID" value="ENSG00000116871.16"/>
</dbReference>
<dbReference type="GeneID" id="55700"/>
<dbReference type="KEGG" id="hsa:55700"/>
<dbReference type="UCSC" id="uc001bzz.5">
    <molecule id="Q3KQU3-1"/>
    <property type="organism name" value="human"/>
</dbReference>
<dbReference type="AGR" id="HGNC:25514"/>
<dbReference type="CTD" id="55700"/>
<dbReference type="DisGeNET" id="55700"/>
<dbReference type="GeneCards" id="MAP7D1"/>
<dbReference type="HGNC" id="HGNC:25514">
    <property type="gene designation" value="MAP7D1"/>
</dbReference>
<dbReference type="HPA" id="ENSG00000116871">
    <property type="expression patterns" value="Tissue enhanced (skeletal)"/>
</dbReference>
<dbReference type="neXtProt" id="NX_Q3KQU3"/>
<dbReference type="OpenTargets" id="ENSG00000116871"/>
<dbReference type="PharmGKB" id="PA162394970"/>
<dbReference type="VEuPathDB" id="HostDB:ENSG00000116871"/>
<dbReference type="eggNOG" id="ENOG502QPJP">
    <property type="taxonomic scope" value="Eukaryota"/>
</dbReference>
<dbReference type="GeneTree" id="ENSGT00950000182941"/>
<dbReference type="HOGENOM" id="CLU_017315_2_0_1"/>
<dbReference type="InParanoid" id="Q3KQU3"/>
<dbReference type="OMA" id="MERSCAG"/>
<dbReference type="OrthoDB" id="10066352at2759"/>
<dbReference type="PAN-GO" id="Q3KQU3">
    <property type="GO annotations" value="2 GO annotations based on evolutionary models"/>
</dbReference>
<dbReference type="PhylomeDB" id="Q3KQU3"/>
<dbReference type="TreeFam" id="TF332273"/>
<dbReference type="PathwayCommons" id="Q3KQU3"/>
<dbReference type="SignaLink" id="Q3KQU3"/>
<dbReference type="BioGRID-ORCS" id="55700">
    <property type="hits" value="19 hits in 1159 CRISPR screens"/>
</dbReference>
<dbReference type="CD-CODE" id="FB4E32DD">
    <property type="entry name" value="Presynaptic clusters and postsynaptic densities"/>
</dbReference>
<dbReference type="ChiTaRS" id="MAP7D1">
    <property type="organism name" value="human"/>
</dbReference>
<dbReference type="GenomeRNAi" id="55700"/>
<dbReference type="Pharos" id="Q3KQU3">
    <property type="development level" value="Tdark"/>
</dbReference>
<dbReference type="PRO" id="PR:Q3KQU3"/>
<dbReference type="Proteomes" id="UP000005640">
    <property type="component" value="Chromosome 1"/>
</dbReference>
<dbReference type="RNAct" id="Q3KQU3">
    <property type="molecule type" value="protein"/>
</dbReference>
<dbReference type="Bgee" id="ENSG00000116871">
    <property type="expression patterns" value="Expressed in apex of heart and 199 other cell types or tissues"/>
</dbReference>
<dbReference type="ExpressionAtlas" id="Q3KQU3">
    <property type="expression patterns" value="baseline and differential"/>
</dbReference>
<dbReference type="GO" id="GO:0005813">
    <property type="term" value="C:centrosome"/>
    <property type="evidence" value="ECO:0000250"/>
    <property type="project" value="UniProtKB"/>
</dbReference>
<dbReference type="GO" id="GO:0005737">
    <property type="term" value="C:cytoplasm"/>
    <property type="evidence" value="ECO:0007669"/>
    <property type="project" value="UniProtKB-KW"/>
</dbReference>
<dbReference type="GO" id="GO:0015630">
    <property type="term" value="C:microtubule cytoskeleton"/>
    <property type="evidence" value="ECO:0000318"/>
    <property type="project" value="GO_Central"/>
</dbReference>
<dbReference type="GO" id="GO:0030496">
    <property type="term" value="C:midbody"/>
    <property type="evidence" value="ECO:0007669"/>
    <property type="project" value="UniProtKB-SubCell"/>
</dbReference>
<dbReference type="GO" id="GO:0005819">
    <property type="term" value="C:spindle"/>
    <property type="evidence" value="ECO:0000314"/>
    <property type="project" value="UniProtKB"/>
</dbReference>
<dbReference type="GO" id="GO:0000226">
    <property type="term" value="P:microtubule cytoskeleton organization"/>
    <property type="evidence" value="ECO:0000250"/>
    <property type="project" value="UniProtKB"/>
</dbReference>
<dbReference type="InterPro" id="IPR051483">
    <property type="entry name" value="MAP7_domain-containing"/>
</dbReference>
<dbReference type="InterPro" id="IPR008604">
    <property type="entry name" value="MAP7_fam"/>
</dbReference>
<dbReference type="PANTHER" id="PTHR15073:SF2">
    <property type="entry name" value="MAP7 DOMAIN-CONTAINING PROTEIN 1"/>
    <property type="match status" value="1"/>
</dbReference>
<dbReference type="PANTHER" id="PTHR15073">
    <property type="entry name" value="MICROTUBULE-ASSOCIATED PROTEIN"/>
    <property type="match status" value="1"/>
</dbReference>
<dbReference type="Pfam" id="PF05672">
    <property type="entry name" value="MAP7"/>
    <property type="match status" value="1"/>
</dbReference>
<organism>
    <name type="scientific">Homo sapiens</name>
    <name type="common">Human</name>
    <dbReference type="NCBI Taxonomy" id="9606"/>
    <lineage>
        <taxon>Eukaryota</taxon>
        <taxon>Metazoa</taxon>
        <taxon>Chordata</taxon>
        <taxon>Craniata</taxon>
        <taxon>Vertebrata</taxon>
        <taxon>Euteleostomi</taxon>
        <taxon>Mammalia</taxon>
        <taxon>Eutheria</taxon>
        <taxon>Euarchontoglires</taxon>
        <taxon>Primates</taxon>
        <taxon>Haplorrhini</taxon>
        <taxon>Catarrhini</taxon>
        <taxon>Hominidae</taxon>
        <taxon>Homo</taxon>
    </lineage>
</organism>
<feature type="chain" id="PRO_0000306807" description="MAP7 domain-containing protein 1">
    <location>
        <begin position="1"/>
        <end position="841"/>
    </location>
</feature>
<feature type="region of interest" description="Disordered" evidence="3">
    <location>
        <begin position="1"/>
        <end position="151"/>
    </location>
</feature>
<feature type="region of interest" description="Disordered" evidence="3">
    <location>
        <begin position="184"/>
        <end position="208"/>
    </location>
</feature>
<feature type="region of interest" description="Disordered" evidence="3">
    <location>
        <begin position="316"/>
        <end position="813"/>
    </location>
</feature>
<feature type="coiled-coil region" evidence="2">
    <location>
        <begin position="128"/>
        <end position="222"/>
    </location>
</feature>
<feature type="coiled-coil region" evidence="2">
    <location>
        <begin position="412"/>
        <end position="441"/>
    </location>
</feature>
<feature type="coiled-coil region" evidence="2">
    <location>
        <begin position="593"/>
        <end position="721"/>
    </location>
</feature>
<feature type="compositionally biased region" description="Pro residues" evidence="3">
    <location>
        <begin position="22"/>
        <end position="52"/>
    </location>
</feature>
<feature type="compositionally biased region" description="Basic and acidic residues" evidence="3">
    <location>
        <begin position="130"/>
        <end position="151"/>
    </location>
</feature>
<feature type="compositionally biased region" description="Polar residues" evidence="3">
    <location>
        <begin position="365"/>
        <end position="377"/>
    </location>
</feature>
<feature type="compositionally biased region" description="Basic and acidic residues" evidence="3">
    <location>
        <begin position="405"/>
        <end position="435"/>
    </location>
</feature>
<feature type="compositionally biased region" description="Low complexity" evidence="3">
    <location>
        <begin position="460"/>
        <end position="473"/>
    </location>
</feature>
<feature type="compositionally biased region" description="Pro residues" evidence="3">
    <location>
        <begin position="479"/>
        <end position="497"/>
    </location>
</feature>
<feature type="compositionally biased region" description="Basic and acidic residues" evidence="3">
    <location>
        <begin position="523"/>
        <end position="539"/>
    </location>
</feature>
<feature type="compositionally biased region" description="Pro residues" evidence="3">
    <location>
        <begin position="544"/>
        <end position="561"/>
    </location>
</feature>
<feature type="compositionally biased region" description="Low complexity" evidence="3">
    <location>
        <begin position="562"/>
        <end position="576"/>
    </location>
</feature>
<feature type="compositionally biased region" description="Pro residues" evidence="3">
    <location>
        <begin position="577"/>
        <end position="586"/>
    </location>
</feature>
<feature type="compositionally biased region" description="Basic and acidic residues" evidence="3">
    <location>
        <begin position="594"/>
        <end position="735"/>
    </location>
</feature>
<feature type="modified residue" description="Phosphothreonine" evidence="11">
    <location>
        <position position="47"/>
    </location>
</feature>
<feature type="modified residue" description="Phosphothreonine" evidence="11">
    <location>
        <position position="51"/>
    </location>
</feature>
<feature type="modified residue" description="Phosphoserine" evidence="14">
    <location>
        <position position="70"/>
    </location>
</feature>
<feature type="modified residue" description="Phosphoserine" evidence="11">
    <location>
        <position position="86"/>
    </location>
</feature>
<feature type="modified residue" description="Phosphoserine" evidence="16">
    <location>
        <position position="93"/>
    </location>
</feature>
<feature type="modified residue" description="Phosphothreonine" evidence="16">
    <location>
        <position position="97"/>
    </location>
</feature>
<feature type="modified residue" description="Phosphoserine" evidence="11 15 16">
    <location>
        <position position="113"/>
    </location>
</feature>
<feature type="modified residue" description="Phosphoserine" evidence="11 16">
    <location>
        <position position="116"/>
    </location>
</feature>
<feature type="modified residue" description="Phosphothreonine" evidence="16">
    <location>
        <position position="118"/>
    </location>
</feature>
<feature type="modified residue" description="Phosphoserine" evidence="16">
    <location>
        <position position="123"/>
    </location>
</feature>
<feature type="modified residue" description="Phosphoserine" evidence="11 13 16">
    <location>
        <position position="125"/>
    </location>
</feature>
<feature type="modified residue" description="Phosphoserine" evidence="16">
    <location>
        <position position="254"/>
    </location>
</feature>
<feature type="modified residue" description="Phosphoserine" evidence="16">
    <location>
        <position position="273"/>
    </location>
</feature>
<feature type="modified residue" description="Phosphoserine" evidence="16">
    <location>
        <position position="313"/>
    </location>
</feature>
<feature type="modified residue" description="Phosphoserine" evidence="16">
    <location>
        <position position="366"/>
    </location>
</feature>
<feature type="modified residue" description="Phosphoserine" evidence="15 16">
    <location>
        <position position="399"/>
    </location>
</feature>
<feature type="modified residue" description="Phosphoserine" evidence="14">
    <location>
        <position position="442"/>
    </location>
</feature>
<feature type="modified residue" description="Phosphoserine" evidence="14 16">
    <location>
        <position position="446"/>
    </location>
</feature>
<feature type="modified residue" description="Phosphoserine" evidence="14">
    <location>
        <position position="452"/>
    </location>
</feature>
<feature type="modified residue" description="Phosphoserine" evidence="16">
    <location>
        <position position="454"/>
    </location>
</feature>
<feature type="modified residue" description="Phosphoserine" evidence="10 11 12 13 14 15 16">
    <location>
        <position position="460"/>
    </location>
</feature>
<feature type="modified residue" description="Phosphoserine" evidence="1">
    <location>
        <position position="479"/>
    </location>
</feature>
<feature type="modified residue" description="Phosphoserine" evidence="1">
    <location>
        <position position="496"/>
    </location>
</feature>
<feature type="modified residue" description="Phosphoserine" evidence="11 13 15 16">
    <location>
        <position position="544"/>
    </location>
</feature>
<feature type="modified residue" description="Phosphoserine" evidence="11 13 15 17">
    <location>
        <position position="548"/>
    </location>
</feature>
<feature type="modified residue" description="Phosphoserine" evidence="11 17">
    <location>
        <position position="552"/>
    </location>
</feature>
<feature type="modified residue" description="Phosphothreonine" evidence="17">
    <location>
        <position position="554"/>
    </location>
</feature>
<feature type="modified residue" description="Phosphoserine" evidence="14">
    <location>
        <position position="742"/>
    </location>
</feature>
<feature type="modified residue" description="Phosphoserine" evidence="16">
    <location>
        <position position="753"/>
    </location>
</feature>
<feature type="modified residue" description="Phosphothreonine" evidence="14">
    <location>
        <position position="813"/>
    </location>
</feature>
<feature type="modified residue" description="Phosphothreonine" evidence="14">
    <location>
        <position position="816"/>
    </location>
</feature>
<feature type="modified residue" description="Phosphoserine" evidence="11 14 16">
    <location>
        <position position="834"/>
    </location>
</feature>
<feature type="cross-link" description="Glycyl lysine isopeptide (Lys-Gly) (interchain with G-Cter in SUMO2)" evidence="18">
    <location>
        <position position="462"/>
    </location>
</feature>
<feature type="splice variant" id="VSP_028483" description="In isoform 3." evidence="7">
    <location>
        <begin position="1"/>
        <end position="454"/>
    </location>
</feature>
<feature type="splice variant" id="VSP_028484" description="In isoform 2." evidence="5 6">
    <location>
        <begin position="247"/>
        <end position="283"/>
    </location>
</feature>
<feature type="splice variant" id="VSP_028485" description="In isoform 4." evidence="8">
    <location>
        <begin position="325"/>
        <end position="356"/>
    </location>
</feature>
<feature type="splice variant" id="VSP_028486" description="In isoform 3." evidence="7">
    <original>TASEL</original>
    <variation>MNGPV</variation>
    <location>
        <begin position="455"/>
        <end position="459"/>
    </location>
</feature>
<feature type="splice variant" id="VSP_028487" description="In isoform 3." evidence="7">
    <location>
        <begin position="570"/>
        <end position="578"/>
    </location>
</feature>
<feature type="splice variant" id="VSP_028488" description="In isoform 2, isoform 3 and isoform 4." evidence="5 6 7 8">
    <location>
        <position position="729"/>
    </location>
</feature>
<feature type="sequence variant" id="VAR_035312" description="In dbSNP:rs2296266.">
    <original>R</original>
    <variation>W</variation>
    <location>
        <position position="104"/>
    </location>
</feature>
<feature type="sequence variant" id="VAR_053970" description="In dbSNP:rs12563354.">
    <original>R</original>
    <variation>S</variation>
    <location>
        <position position="531"/>
    </location>
</feature>
<feature type="sequence conflict" description="In Ref. 6; AAG17244." evidence="9" ref="6">
    <original>N</original>
    <variation>S</variation>
    <location>
        <position position="207"/>
    </location>
</feature>
<feature type="sequence conflict" description="In Ref. 3; BAC04654." evidence="9" ref="3">
    <original>H</original>
    <variation>R</variation>
    <location>
        <position position="794"/>
    </location>
</feature>
<name>MA7D1_HUMAN</name>
<reference key="1">
    <citation type="journal article" date="1999" name="DNA Res.">
        <title>Characterization of cDNA clones selected by the GeneMark analysis from size-fractionated cDNA libraries from human brain.</title>
        <authorList>
            <person name="Hirosawa M."/>
            <person name="Nagase T."/>
            <person name="Ishikawa K."/>
            <person name="Kikuno R."/>
            <person name="Nomura N."/>
            <person name="Ohara O."/>
        </authorList>
    </citation>
    <scope>NUCLEOTIDE SEQUENCE [LARGE SCALE MRNA] (ISOFORM 2)</scope>
    <source>
        <tissue>Brain</tissue>
    </source>
</reference>
<reference key="2">
    <citation type="journal article" date="2002" name="DNA Res.">
        <title>Construction of expression-ready cDNA clones for KIAA genes: manual curation of 330 KIAA cDNA clones.</title>
        <authorList>
            <person name="Nakajima D."/>
            <person name="Okazaki N."/>
            <person name="Yamakawa H."/>
            <person name="Kikuno R."/>
            <person name="Ohara O."/>
            <person name="Nagase T."/>
        </authorList>
    </citation>
    <scope>SEQUENCE REVISION</scope>
</reference>
<reference key="3">
    <citation type="journal article" date="2004" name="Nat. Genet.">
        <title>Complete sequencing and characterization of 21,243 full-length human cDNAs.</title>
        <authorList>
            <person name="Ota T."/>
            <person name="Suzuki Y."/>
            <person name="Nishikawa T."/>
            <person name="Otsuki T."/>
            <person name="Sugiyama T."/>
            <person name="Irie R."/>
            <person name="Wakamatsu A."/>
            <person name="Hayashi K."/>
            <person name="Sato H."/>
            <person name="Nagai K."/>
            <person name="Kimura K."/>
            <person name="Makita H."/>
            <person name="Sekine M."/>
            <person name="Obayashi M."/>
            <person name="Nishi T."/>
            <person name="Shibahara T."/>
            <person name="Tanaka T."/>
            <person name="Ishii S."/>
            <person name="Yamamoto J."/>
            <person name="Saito K."/>
            <person name="Kawai Y."/>
            <person name="Isono Y."/>
            <person name="Nakamura Y."/>
            <person name="Nagahari K."/>
            <person name="Murakami K."/>
            <person name="Yasuda T."/>
            <person name="Iwayanagi T."/>
            <person name="Wagatsuma M."/>
            <person name="Shiratori A."/>
            <person name="Sudo H."/>
            <person name="Hosoiri T."/>
            <person name="Kaku Y."/>
            <person name="Kodaira H."/>
            <person name="Kondo H."/>
            <person name="Sugawara M."/>
            <person name="Takahashi M."/>
            <person name="Kanda K."/>
            <person name="Yokoi T."/>
            <person name="Furuya T."/>
            <person name="Kikkawa E."/>
            <person name="Omura Y."/>
            <person name="Abe K."/>
            <person name="Kamihara K."/>
            <person name="Katsuta N."/>
            <person name="Sato K."/>
            <person name="Tanikawa M."/>
            <person name="Yamazaki M."/>
            <person name="Ninomiya K."/>
            <person name="Ishibashi T."/>
            <person name="Yamashita H."/>
            <person name="Murakawa K."/>
            <person name="Fujimori K."/>
            <person name="Tanai H."/>
            <person name="Kimata M."/>
            <person name="Watanabe M."/>
            <person name="Hiraoka S."/>
            <person name="Chiba Y."/>
            <person name="Ishida S."/>
            <person name="Ono Y."/>
            <person name="Takiguchi S."/>
            <person name="Watanabe S."/>
            <person name="Yosida M."/>
            <person name="Hotuta T."/>
            <person name="Kusano J."/>
            <person name="Kanehori K."/>
            <person name="Takahashi-Fujii A."/>
            <person name="Hara H."/>
            <person name="Tanase T.-O."/>
            <person name="Nomura Y."/>
            <person name="Togiya S."/>
            <person name="Komai F."/>
            <person name="Hara R."/>
            <person name="Takeuchi K."/>
            <person name="Arita M."/>
            <person name="Imose N."/>
            <person name="Musashino K."/>
            <person name="Yuuki H."/>
            <person name="Oshima A."/>
            <person name="Sasaki N."/>
            <person name="Aotsuka S."/>
            <person name="Yoshikawa Y."/>
            <person name="Matsunawa H."/>
            <person name="Ichihara T."/>
            <person name="Shiohata N."/>
            <person name="Sano S."/>
            <person name="Moriya S."/>
            <person name="Momiyama H."/>
            <person name="Satoh N."/>
            <person name="Takami S."/>
            <person name="Terashima Y."/>
            <person name="Suzuki O."/>
            <person name="Nakagawa S."/>
            <person name="Senoh A."/>
            <person name="Mizoguchi H."/>
            <person name="Goto Y."/>
            <person name="Shimizu F."/>
            <person name="Wakebe H."/>
            <person name="Hishigaki H."/>
            <person name="Watanabe T."/>
            <person name="Sugiyama A."/>
            <person name="Takemoto M."/>
            <person name="Kawakami B."/>
            <person name="Yamazaki M."/>
            <person name="Watanabe K."/>
            <person name="Kumagai A."/>
            <person name="Itakura S."/>
            <person name="Fukuzumi Y."/>
            <person name="Fujimori Y."/>
            <person name="Komiyama M."/>
            <person name="Tashiro H."/>
            <person name="Tanigami A."/>
            <person name="Fujiwara T."/>
            <person name="Ono T."/>
            <person name="Yamada K."/>
            <person name="Fujii Y."/>
            <person name="Ozaki K."/>
            <person name="Hirao M."/>
            <person name="Ohmori Y."/>
            <person name="Kawabata A."/>
            <person name="Hikiji T."/>
            <person name="Kobatake N."/>
            <person name="Inagaki H."/>
            <person name="Ikema Y."/>
            <person name="Okamoto S."/>
            <person name="Okitani R."/>
            <person name="Kawakami T."/>
            <person name="Noguchi S."/>
            <person name="Itoh T."/>
            <person name="Shigeta K."/>
            <person name="Senba T."/>
            <person name="Matsumura K."/>
            <person name="Nakajima Y."/>
            <person name="Mizuno T."/>
            <person name="Morinaga M."/>
            <person name="Sasaki M."/>
            <person name="Togashi T."/>
            <person name="Oyama M."/>
            <person name="Hata H."/>
            <person name="Watanabe M."/>
            <person name="Komatsu T."/>
            <person name="Mizushima-Sugano J."/>
            <person name="Satoh T."/>
            <person name="Shirai Y."/>
            <person name="Takahashi Y."/>
            <person name="Nakagawa K."/>
            <person name="Okumura K."/>
            <person name="Nagase T."/>
            <person name="Nomura N."/>
            <person name="Kikuchi H."/>
            <person name="Masuho Y."/>
            <person name="Yamashita R."/>
            <person name="Nakai K."/>
            <person name="Yada T."/>
            <person name="Nakamura Y."/>
            <person name="Ohara O."/>
            <person name="Isogai T."/>
            <person name="Sugano S."/>
        </authorList>
    </citation>
    <scope>NUCLEOTIDE SEQUENCE [LARGE SCALE MRNA] (ISOFORM 3)</scope>
    <source>
        <tissue>Heart</tissue>
        <tissue>Teratocarcinoma</tissue>
    </source>
</reference>
<reference key="4">
    <citation type="submission" date="2005-09" db="EMBL/GenBank/DDBJ databases">
        <authorList>
            <person name="Mural R.J."/>
            <person name="Istrail S."/>
            <person name="Sutton G.G."/>
            <person name="Florea L."/>
            <person name="Halpern A.L."/>
            <person name="Mobarry C.M."/>
            <person name="Lippert R."/>
            <person name="Walenz B."/>
            <person name="Shatkay H."/>
            <person name="Dew I."/>
            <person name="Miller J.R."/>
            <person name="Flanigan M.J."/>
            <person name="Edwards N.J."/>
            <person name="Bolanos R."/>
            <person name="Fasulo D."/>
            <person name="Halldorsson B.V."/>
            <person name="Hannenhalli S."/>
            <person name="Turner R."/>
            <person name="Yooseph S."/>
            <person name="Lu F."/>
            <person name="Nusskern D.R."/>
            <person name="Shue B.C."/>
            <person name="Zheng X.H."/>
            <person name="Zhong F."/>
            <person name="Delcher A.L."/>
            <person name="Huson D.H."/>
            <person name="Kravitz S.A."/>
            <person name="Mouchard L."/>
            <person name="Reinert K."/>
            <person name="Remington K.A."/>
            <person name="Clark A.G."/>
            <person name="Waterman M.S."/>
            <person name="Eichler E.E."/>
            <person name="Adams M.D."/>
            <person name="Hunkapiller M.W."/>
            <person name="Myers E.W."/>
            <person name="Venter J.C."/>
        </authorList>
    </citation>
    <scope>NUCLEOTIDE SEQUENCE [LARGE SCALE GENOMIC DNA]</scope>
</reference>
<reference key="5">
    <citation type="journal article" date="2004" name="Genome Res.">
        <title>The status, quality, and expansion of the NIH full-length cDNA project: the Mammalian Gene Collection (MGC).</title>
        <authorList>
            <consortium name="The MGC Project Team"/>
        </authorList>
    </citation>
    <scope>NUCLEOTIDE SEQUENCE [LARGE SCALE MRNA] (ISOFORM 1)</scope>
    <scope>NUCLEOTIDE SEQUENCE [LARGE SCALE MRNA] OF 625-841 (ISOFORMS 2/3/4)</scope>
    <source>
        <tissue>Bone</tissue>
        <tissue>Uterus</tissue>
    </source>
</reference>
<reference key="6">
    <citation type="journal article" date="2004" name="Proc. Natl. Acad. Sci. U.S.A.">
        <title>Large-scale cDNA transfection screening for genes related to cancer development and progression.</title>
        <authorList>
            <person name="Wan D."/>
            <person name="Gong Y."/>
            <person name="Qin W."/>
            <person name="Zhang P."/>
            <person name="Li J."/>
            <person name="Wei L."/>
            <person name="Zhou X."/>
            <person name="Li H."/>
            <person name="Qiu X."/>
            <person name="Zhong F."/>
            <person name="He L."/>
            <person name="Yu J."/>
            <person name="Yao G."/>
            <person name="Jiang H."/>
            <person name="Qian L."/>
            <person name="Yu Y."/>
            <person name="Shu H."/>
            <person name="Chen X."/>
            <person name="Xu H."/>
            <person name="Guo M."/>
            <person name="Pan Z."/>
            <person name="Chen Y."/>
            <person name="Ge C."/>
            <person name="Yang S."/>
            <person name="Gu J."/>
        </authorList>
    </citation>
    <scope>NUCLEOTIDE SEQUENCE [LARGE SCALE MRNA] OF 77-841 (ISOFORM 4)</scope>
</reference>
<reference key="7">
    <citation type="journal article" date="2001" name="Genome Res.">
        <title>Towards a catalog of human genes and proteins: sequencing and analysis of 500 novel complete protein coding human cDNAs.</title>
        <authorList>
            <person name="Wiemann S."/>
            <person name="Weil B."/>
            <person name="Wellenreuther R."/>
            <person name="Gassenhuber J."/>
            <person name="Glassl S."/>
            <person name="Ansorge W."/>
            <person name="Boecher M."/>
            <person name="Bloecker H."/>
            <person name="Bauersachs S."/>
            <person name="Blum H."/>
            <person name="Lauber J."/>
            <person name="Duesterhoeft A."/>
            <person name="Beyer A."/>
            <person name="Koehrer K."/>
            <person name="Strack N."/>
            <person name="Mewes H.-W."/>
            <person name="Ottenwaelder B."/>
            <person name="Obermaier B."/>
            <person name="Tampe J."/>
            <person name="Heubner D."/>
            <person name="Wambutt R."/>
            <person name="Korn B."/>
            <person name="Klein M."/>
            <person name="Poustka A."/>
        </authorList>
    </citation>
    <scope>NUCLEOTIDE SEQUENCE [LARGE SCALE MRNA] OF 546-841 (ISOFORM 2)</scope>
    <source>
        <tissue>Amygdala</tissue>
    </source>
</reference>
<reference key="8">
    <citation type="submission" date="2004-06" db="EMBL/GenBank/DDBJ databases">
        <title>Cloning of human full open reading frames in Gateway(TM) system entry vector (pDONR201).</title>
        <authorList>
            <person name="Ebert L."/>
            <person name="Schick M."/>
            <person name="Neubert P."/>
            <person name="Schatten R."/>
            <person name="Henze S."/>
            <person name="Korn B."/>
        </authorList>
    </citation>
    <scope>NUCLEOTIDE SEQUENCE [LARGE SCALE MRNA] OF 590-841 (ISOFORMS 2/3/4)</scope>
</reference>
<reference key="9">
    <citation type="journal article" date="2005" name="Mol. Cell. Proteomics">
        <title>Proteome analysis of the human mitotic spindle.</title>
        <authorList>
            <person name="Sauer G."/>
            <person name="Koerner R."/>
            <person name="Hanisch A."/>
            <person name="Ries A."/>
            <person name="Nigg E.A."/>
            <person name="Sillje H.H.W."/>
        </authorList>
    </citation>
    <scope>SUBCELLULAR LOCATION</scope>
    <scope>IDENTIFICATION BY MASS SPECTROMETRY</scope>
</reference>
<reference key="10">
    <citation type="journal article" date="2006" name="Cell">
        <title>Global, in vivo, and site-specific phosphorylation dynamics in signaling networks.</title>
        <authorList>
            <person name="Olsen J.V."/>
            <person name="Blagoev B."/>
            <person name="Gnad F."/>
            <person name="Macek B."/>
            <person name="Kumar C."/>
            <person name="Mortensen P."/>
            <person name="Mann M."/>
        </authorList>
    </citation>
    <scope>IDENTIFICATION BY MASS SPECTROMETRY [LARGE SCALE ANALYSIS]</scope>
    <source>
        <tissue>Cervix carcinoma</tissue>
    </source>
</reference>
<reference key="11">
    <citation type="journal article" date="2006" name="Nat. Biotechnol.">
        <title>A probability-based approach for high-throughput protein phosphorylation analysis and site localization.</title>
        <authorList>
            <person name="Beausoleil S.A."/>
            <person name="Villen J."/>
            <person name="Gerber S.A."/>
            <person name="Rush J."/>
            <person name="Gygi S.P."/>
        </authorList>
    </citation>
    <scope>PHOSPHORYLATION [LARGE SCALE ANALYSIS] AT SER-460</scope>
    <scope>IDENTIFICATION BY MASS SPECTROMETRY [LARGE SCALE ANALYSIS]</scope>
    <source>
        <tissue>Cervix carcinoma</tissue>
    </source>
</reference>
<reference key="12">
    <citation type="journal article" date="2008" name="Mol. Cell">
        <title>Kinase-selective enrichment enables quantitative phosphoproteomics of the kinome across the cell cycle.</title>
        <authorList>
            <person name="Daub H."/>
            <person name="Olsen J.V."/>
            <person name="Bairlein M."/>
            <person name="Gnad F."/>
            <person name="Oppermann F.S."/>
            <person name="Korner R."/>
            <person name="Greff Z."/>
            <person name="Keri G."/>
            <person name="Stemmann O."/>
            <person name="Mann M."/>
        </authorList>
    </citation>
    <scope>PHOSPHORYLATION [LARGE SCALE ANALYSIS] AT SER-460</scope>
    <scope>IDENTIFICATION BY MASS SPECTROMETRY [LARGE SCALE ANALYSIS]</scope>
    <source>
        <tissue>Cervix carcinoma</tissue>
    </source>
</reference>
<reference key="13">
    <citation type="journal article" date="2008" name="Proc. Natl. Acad. Sci. U.S.A.">
        <title>A quantitative atlas of mitotic phosphorylation.</title>
        <authorList>
            <person name="Dephoure N."/>
            <person name="Zhou C."/>
            <person name="Villen J."/>
            <person name="Beausoleil S.A."/>
            <person name="Bakalarski C.E."/>
            <person name="Elledge S.J."/>
            <person name="Gygi S.P."/>
        </authorList>
    </citation>
    <scope>PHOSPHORYLATION [LARGE SCALE ANALYSIS] AT THR-47; THR-51; SER-86; SER-113; SER-116; SER-125; SER-460; SER-544; SER-548; SER-552 AND SER-834</scope>
    <scope>IDENTIFICATION BY MASS SPECTROMETRY [LARGE SCALE ANALYSIS]</scope>
    <source>
        <tissue>Cervix carcinoma</tissue>
    </source>
</reference>
<reference key="14">
    <citation type="journal article" date="2009" name="Anal. Chem.">
        <title>Lys-N and trypsin cover complementary parts of the phosphoproteome in a refined SCX-based approach.</title>
        <authorList>
            <person name="Gauci S."/>
            <person name="Helbig A.O."/>
            <person name="Slijper M."/>
            <person name="Krijgsveld J."/>
            <person name="Heck A.J."/>
            <person name="Mohammed S."/>
        </authorList>
    </citation>
    <scope>IDENTIFICATION BY MASS SPECTROMETRY [LARGE SCALE ANALYSIS]</scope>
</reference>
<reference key="15">
    <citation type="journal article" date="2009" name="Sci. Signal.">
        <title>Quantitative phosphoproteomic analysis of T cell receptor signaling reveals system-wide modulation of protein-protein interactions.</title>
        <authorList>
            <person name="Mayya V."/>
            <person name="Lundgren D.H."/>
            <person name="Hwang S.-I."/>
            <person name="Rezaul K."/>
            <person name="Wu L."/>
            <person name="Eng J.K."/>
            <person name="Rodionov V."/>
            <person name="Han D.K."/>
        </authorList>
    </citation>
    <scope>PHOSPHORYLATION [LARGE SCALE ANALYSIS] AT SER-125; SER-460; SER-544 AND SER-548</scope>
    <scope>IDENTIFICATION BY MASS SPECTROMETRY [LARGE SCALE ANALYSIS]</scope>
    <source>
        <tissue>Leukemic T-cell</tissue>
    </source>
</reference>
<reference key="16">
    <citation type="journal article" date="2010" name="Sci. Signal.">
        <title>Quantitative phosphoproteomics reveals widespread full phosphorylation site occupancy during mitosis.</title>
        <authorList>
            <person name="Olsen J.V."/>
            <person name="Vermeulen M."/>
            <person name="Santamaria A."/>
            <person name="Kumar C."/>
            <person name="Miller M.L."/>
            <person name="Jensen L.J."/>
            <person name="Gnad F."/>
            <person name="Cox J."/>
            <person name="Jensen T.S."/>
            <person name="Nigg E.A."/>
            <person name="Brunak S."/>
            <person name="Mann M."/>
        </authorList>
    </citation>
    <scope>PHOSPHORYLATION [LARGE SCALE ANALYSIS] AT SER-70; SER-442; SER-446; SER-452; SER-460; SER-742; THR-813; THR-816 AND SER-834</scope>
    <scope>IDENTIFICATION BY MASS SPECTROMETRY [LARGE SCALE ANALYSIS]</scope>
    <source>
        <tissue>Cervix carcinoma</tissue>
    </source>
</reference>
<reference key="17">
    <citation type="journal article" date="2011" name="BMC Syst. Biol.">
        <title>Initial characterization of the human central proteome.</title>
        <authorList>
            <person name="Burkard T.R."/>
            <person name="Planyavsky M."/>
            <person name="Kaupe I."/>
            <person name="Breitwieser F.P."/>
            <person name="Buerckstuemmer T."/>
            <person name="Bennett K.L."/>
            <person name="Superti-Furga G."/>
            <person name="Colinge J."/>
        </authorList>
    </citation>
    <scope>IDENTIFICATION BY MASS SPECTROMETRY [LARGE SCALE ANALYSIS]</scope>
</reference>
<reference key="18">
    <citation type="journal article" date="2011" name="Sci. Signal.">
        <title>System-wide temporal characterization of the proteome and phosphoproteome of human embryonic stem cell differentiation.</title>
        <authorList>
            <person name="Rigbolt K.T."/>
            <person name="Prokhorova T.A."/>
            <person name="Akimov V."/>
            <person name="Henningsen J."/>
            <person name="Johansen P.T."/>
            <person name="Kratchmarova I."/>
            <person name="Kassem M."/>
            <person name="Mann M."/>
            <person name="Olsen J.V."/>
            <person name="Blagoev B."/>
        </authorList>
    </citation>
    <scope>PHOSPHORYLATION [LARGE SCALE ANALYSIS] AT SER-113; SER-399; SER-460; SER-544 AND SER-548</scope>
    <scope>IDENTIFICATION BY MASS SPECTROMETRY [LARGE SCALE ANALYSIS]</scope>
</reference>
<reference key="19">
    <citation type="journal article" date="2013" name="J. Proteome Res.">
        <title>Toward a comprehensive characterization of a human cancer cell phosphoproteome.</title>
        <authorList>
            <person name="Zhou H."/>
            <person name="Di Palma S."/>
            <person name="Preisinger C."/>
            <person name="Peng M."/>
            <person name="Polat A.N."/>
            <person name="Heck A.J."/>
            <person name="Mohammed S."/>
        </authorList>
    </citation>
    <scope>PHOSPHORYLATION [LARGE SCALE ANALYSIS] AT SER-93; THR-97; SER-113; SER-116; THR-118; SER-123; SER-125; SER-254; SER-273; SER-313; SER-366; SER-399; SER-446; SER-454; SER-460; SER-544; SER-753 AND SER-834</scope>
    <scope>IDENTIFICATION BY MASS SPECTROMETRY [LARGE SCALE ANALYSIS]</scope>
    <source>
        <tissue>Cervix carcinoma</tissue>
        <tissue>Erythroleukemia</tissue>
    </source>
</reference>
<reference key="20">
    <citation type="journal article" date="2014" name="J. Proteomics">
        <title>An enzyme assisted RP-RPLC approach for in-depth analysis of human liver phosphoproteome.</title>
        <authorList>
            <person name="Bian Y."/>
            <person name="Song C."/>
            <person name="Cheng K."/>
            <person name="Dong M."/>
            <person name="Wang F."/>
            <person name="Huang J."/>
            <person name="Sun D."/>
            <person name="Wang L."/>
            <person name="Ye M."/>
            <person name="Zou H."/>
        </authorList>
    </citation>
    <scope>PHOSPHORYLATION [LARGE SCALE ANALYSIS] AT SER-548; SER-552 AND THR-554</scope>
    <scope>IDENTIFICATION BY MASS SPECTROMETRY [LARGE SCALE ANALYSIS]</scope>
    <source>
        <tissue>Liver</tissue>
    </source>
</reference>
<reference key="21">
    <citation type="journal article" date="2017" name="Nat. Struct. Mol. Biol.">
        <title>Site-specific mapping of the human SUMO proteome reveals co-modification with phosphorylation.</title>
        <authorList>
            <person name="Hendriks I.A."/>
            <person name="Lyon D."/>
            <person name="Young C."/>
            <person name="Jensen L.J."/>
            <person name="Vertegaal A.C."/>
            <person name="Nielsen M.L."/>
        </authorList>
    </citation>
    <scope>SUMOYLATION [LARGE SCALE ANALYSIS] AT LYS-462</scope>
    <scope>IDENTIFICATION BY MASS SPECTROMETRY [LARGE SCALE ANALYSIS]</scope>
</reference>
<keyword id="KW-0025">Alternative splicing</keyword>
<keyword id="KW-0175">Coiled coil</keyword>
<keyword id="KW-0963">Cytoplasm</keyword>
<keyword id="KW-0206">Cytoskeleton</keyword>
<keyword id="KW-1017">Isopeptide bond</keyword>
<keyword id="KW-0597">Phosphoprotein</keyword>
<keyword id="KW-1267">Proteomics identification</keyword>
<keyword id="KW-1185">Reference proteome</keyword>
<keyword id="KW-0832">Ubl conjugation</keyword>
<sequence length="841" mass="92820">MESGPRAELGAGAPPAVVARTPPEPRPSPEGDPSPPPPPMSALVPDTPPDTPPAMKNATSSKQLPLEPESPSGQVGPRPAPPQEESPSSEAKSRGPTPPAMGPRDARPPRRSSQPSPTAVPASDSPPTKQEVKKAGERHKLAKERREERAKYLAAKKAVWLEKEEKAKALREKQLQERRRRLEEQRLKAEQRRAALEERQRQKLEKNKERYEAAIQRSVKKTWAEIRQQRWSWAGALHHSSPGHKTSGSRCSVSAVNLPKHVDSIINKRLSKSSATLWNSPSRNRSLQLSAWESSIVDRLMTPTLSFLARSRSAVTLPRNGRDQGRGCDPGRGPTWGRAGASLARGPQPDRTHPSAAVPVCPRSASASPLTPCSVTRSVHRCAPAGERGERRKPNAGGSPAPVRRRPEASPVQKKEKKDKERENEKEKSALARERSLKKRQSLPASPRARLSASTASELSPKSKARPSSPSTSWHRPASPCPSPGPGHTLPPKPPSPRGTTASPKGRVRRKEEAKESPSAAGPEDKSQSKRRASNEKESAAPASPAPSPAPSPTPAPPQKEQPPAETPTDAAVLTSPPAPAPPVTPSKPMAGTTDREEATRLLAEKRRQAREQREREEQERRLQAERDKRMREEQLAREAEARAEREAEARRREEQEAREKAQAEQEEQERLQKQKEEAEARSREEAERQRLEREKHFQQQEQERQERRKRLEEIMKRTRKSEVSETKQKQDSKEANANGSSPEPVKAVEARSPGLQKEAVQKEEPIPQEPQWSLPSKELPASLVNGLQPLPAHQENGFSTNGPSGDKSLSRTPETLLPFAEAEAFLKKAVVQSPQVTEVL</sequence>
<accession>Q3KQU3</accession>
<accession>D3DPS4</accession>
<accession>Q7L8J5</accession>
<accession>Q8N905</accession>
<accession>Q8TAK0</accession>
<accession>Q9HBQ2</accession>
<accession>Q9NW29</accession>
<accession>Q9ULN3</accession>
<proteinExistence type="evidence at protein level"/>
<evidence type="ECO:0000250" key="1">
    <source>
        <dbReference type="UniProtKB" id="A2AJI0"/>
    </source>
</evidence>
<evidence type="ECO:0000255" key="2"/>
<evidence type="ECO:0000256" key="3">
    <source>
        <dbReference type="SAM" id="MobiDB-lite"/>
    </source>
</evidence>
<evidence type="ECO:0000269" key="4">
    <source>
    </source>
</evidence>
<evidence type="ECO:0000303" key="5">
    <source>
    </source>
</evidence>
<evidence type="ECO:0000303" key="6">
    <source>
    </source>
</evidence>
<evidence type="ECO:0000303" key="7">
    <source>
    </source>
</evidence>
<evidence type="ECO:0000303" key="8">
    <source>
    </source>
</evidence>
<evidence type="ECO:0000305" key="9"/>
<evidence type="ECO:0007744" key="10">
    <source>
    </source>
</evidence>
<evidence type="ECO:0007744" key="11">
    <source>
    </source>
</evidence>
<evidence type="ECO:0007744" key="12">
    <source>
    </source>
</evidence>
<evidence type="ECO:0007744" key="13">
    <source>
    </source>
</evidence>
<evidence type="ECO:0007744" key="14">
    <source>
    </source>
</evidence>
<evidence type="ECO:0007744" key="15">
    <source>
    </source>
</evidence>
<evidence type="ECO:0007744" key="16">
    <source>
    </source>
</evidence>
<evidence type="ECO:0007744" key="17">
    <source>
    </source>
</evidence>
<evidence type="ECO:0007744" key="18">
    <source>
    </source>
</evidence>